<gene>
    <name type="primary">npgA</name>
    <name type="synonym">cfwA</name>
    <name type="ORF">ANIA_06140</name>
</gene>
<accession>G5EB87</accession>
<accession>A0A1U8QGT1</accession>
<accession>C8V2B5</accession>
<accession>Q5AZZ0</accession>
<accession>Q9UVK7</accession>
<comment type="function">
    <text evidence="2 3 4 6">Transfers the 4'-phosphopantetheine moiety from coenzyme A to a Ser of an acyl-carrier-protein. The enzyme is able to transfer the cofactor to a broad range of enzymes with acyl- or peptidyl-carrier protein domains. Required for primary biological processes such as growth and asexual/sexual development, and activates target enzymes involved in the synthesis of metabolites such as fatty acids, polyketides and nonribosomal peptides, lysine, siderophore, penicillin, sterigmatocystin, shamixantone, dehydroaustinol, and pigments.</text>
</comment>
<comment type="catalytic activity">
    <reaction evidence="1 5 6">
        <text>apo-[ACP] + CoA = holo-[ACP] + adenosine 3',5'-bisphosphate + H(+)</text>
        <dbReference type="Rhea" id="RHEA:12068"/>
        <dbReference type="Rhea" id="RHEA-COMP:9685"/>
        <dbReference type="Rhea" id="RHEA-COMP:9690"/>
        <dbReference type="ChEBI" id="CHEBI:15378"/>
        <dbReference type="ChEBI" id="CHEBI:29999"/>
        <dbReference type="ChEBI" id="CHEBI:57287"/>
        <dbReference type="ChEBI" id="CHEBI:58343"/>
        <dbReference type="ChEBI" id="CHEBI:64479"/>
        <dbReference type="EC" id="2.7.8.7"/>
    </reaction>
</comment>
<comment type="disruption phenotype">
    <text evidence="6">Essential for growth.</text>
</comment>
<comment type="similarity">
    <text evidence="7">Belongs to the P-Pant transferase superfamily.</text>
</comment>
<feature type="chain" id="PRO_0000442635" description="4'-phosphopantetheinyl transferase NpgA">
    <location>
        <begin position="1"/>
        <end position="344"/>
    </location>
</feature>
<feature type="mutagenesis site" description="In cfwA2; abolishes penicillin biosynthesis; when associated with R-217.">
    <original>D</original>
    <variation>G</variation>
    <location>
        <position position="20"/>
    </location>
</feature>
<feature type="mutagenesis site" description="In cfwA2; abolishes penicillin biosynthesis; when associated with G-20.">
    <original>L</original>
    <variation>R</variation>
    <location>
        <position position="217"/>
    </location>
</feature>
<proteinExistence type="evidence at protein level"/>
<reference key="1">
    <citation type="journal article" date="2015" name="J. Microbiol.">
        <title>Characterization of NpgA, a 4'-phosphopantetheinyl transferase of Aspergillus nidulans, and evidence of its involvement in fungal growth and formation of conidia and cleistothecia for development.</title>
        <authorList>
            <person name="Kim J.M."/>
            <person name="Song H.Y."/>
            <person name="Choi H.J."/>
            <person name="So K.K."/>
            <person name="Kim D.H."/>
            <person name="Chae K.S."/>
            <person name="Han D.M."/>
            <person name="Jahng K.Y."/>
        </authorList>
    </citation>
    <scope>NUCLEOTIDE SEQUENCE [GENOMIC DNA]</scope>
    <scope>FUNCTION</scope>
    <scope>DISRUPTION PHENOTYPE</scope>
    <source>
        <strain>FGSC A4 / ATCC 38163 / CBS 112.46 / NRRL 194 / M139</strain>
    </source>
</reference>
<reference key="2">
    <citation type="journal article" date="2005" name="Nature">
        <title>Sequencing of Aspergillus nidulans and comparative analysis with A. fumigatus and A. oryzae.</title>
        <authorList>
            <person name="Galagan J.E."/>
            <person name="Calvo S.E."/>
            <person name="Cuomo C."/>
            <person name="Ma L.-J."/>
            <person name="Wortman J.R."/>
            <person name="Batzoglou S."/>
            <person name="Lee S.-I."/>
            <person name="Bastuerkmen M."/>
            <person name="Spevak C.C."/>
            <person name="Clutterbuck J."/>
            <person name="Kapitonov V."/>
            <person name="Jurka J."/>
            <person name="Scazzocchio C."/>
            <person name="Farman M.L."/>
            <person name="Butler J."/>
            <person name="Purcell S."/>
            <person name="Harris S."/>
            <person name="Braus G.H."/>
            <person name="Draht O."/>
            <person name="Busch S."/>
            <person name="D'Enfert C."/>
            <person name="Bouchier C."/>
            <person name="Goldman G.H."/>
            <person name="Bell-Pedersen D."/>
            <person name="Griffiths-Jones S."/>
            <person name="Doonan J.H."/>
            <person name="Yu J."/>
            <person name="Vienken K."/>
            <person name="Pain A."/>
            <person name="Freitag M."/>
            <person name="Selker E.U."/>
            <person name="Archer D.B."/>
            <person name="Penalva M.A."/>
            <person name="Oakley B.R."/>
            <person name="Momany M."/>
            <person name="Tanaka T."/>
            <person name="Kumagai T."/>
            <person name="Asai K."/>
            <person name="Machida M."/>
            <person name="Nierman W.C."/>
            <person name="Denning D.W."/>
            <person name="Caddick M.X."/>
            <person name="Hynes M."/>
            <person name="Paoletti M."/>
            <person name="Fischer R."/>
            <person name="Miller B.L."/>
            <person name="Dyer P.S."/>
            <person name="Sachs M.S."/>
            <person name="Osmani S.A."/>
            <person name="Birren B.W."/>
        </authorList>
    </citation>
    <scope>NUCLEOTIDE SEQUENCE [LARGE SCALE GENOMIC DNA]</scope>
    <source>
        <strain>FGSC A4 / ATCC 38163 / CBS 112.46 / NRRL 194 / M139</strain>
    </source>
</reference>
<reference key="3">
    <citation type="journal article" date="2009" name="Fungal Genet. Biol.">
        <title>The 2008 update of the Aspergillus nidulans genome annotation: a community effort.</title>
        <authorList>
            <person name="Wortman J.R."/>
            <person name="Gilsenan J.M."/>
            <person name="Joardar V."/>
            <person name="Deegan J."/>
            <person name="Clutterbuck J."/>
            <person name="Andersen M.R."/>
            <person name="Archer D."/>
            <person name="Bencina M."/>
            <person name="Braus G."/>
            <person name="Coutinho P."/>
            <person name="von Dohren H."/>
            <person name="Doonan J."/>
            <person name="Driessen A.J."/>
            <person name="Durek P."/>
            <person name="Espeso E."/>
            <person name="Fekete E."/>
            <person name="Flipphi M."/>
            <person name="Estrada C.G."/>
            <person name="Geysens S."/>
            <person name="Goldman G."/>
            <person name="de Groot P.W."/>
            <person name="Hansen K."/>
            <person name="Harris S.D."/>
            <person name="Heinekamp T."/>
            <person name="Helmstaedt K."/>
            <person name="Henrissat B."/>
            <person name="Hofmann G."/>
            <person name="Homan T."/>
            <person name="Horio T."/>
            <person name="Horiuchi H."/>
            <person name="James S."/>
            <person name="Jones M."/>
            <person name="Karaffa L."/>
            <person name="Karanyi Z."/>
            <person name="Kato M."/>
            <person name="Keller N."/>
            <person name="Kelly D.E."/>
            <person name="Kiel J.A."/>
            <person name="Kim J.M."/>
            <person name="van der Klei I.J."/>
            <person name="Klis F.M."/>
            <person name="Kovalchuk A."/>
            <person name="Krasevec N."/>
            <person name="Kubicek C.P."/>
            <person name="Liu B."/>
            <person name="Maccabe A."/>
            <person name="Meyer V."/>
            <person name="Mirabito P."/>
            <person name="Miskei M."/>
            <person name="Mos M."/>
            <person name="Mullins J."/>
            <person name="Nelson D.R."/>
            <person name="Nielsen J."/>
            <person name="Oakley B.R."/>
            <person name="Osmani S.A."/>
            <person name="Pakula T."/>
            <person name="Paszewski A."/>
            <person name="Paulsen I."/>
            <person name="Pilsyk S."/>
            <person name="Pocsi I."/>
            <person name="Punt P.J."/>
            <person name="Ram A.F."/>
            <person name="Ren Q."/>
            <person name="Robellet X."/>
            <person name="Robson G."/>
            <person name="Seiboth B."/>
            <person name="van Solingen P."/>
            <person name="Specht T."/>
            <person name="Sun J."/>
            <person name="Taheri-Talesh N."/>
            <person name="Takeshita N."/>
            <person name="Ussery D."/>
            <person name="vanKuyk P.A."/>
            <person name="Visser H."/>
            <person name="van de Vondervoort P.J."/>
            <person name="de Vries R.P."/>
            <person name="Walton J."/>
            <person name="Xiang X."/>
            <person name="Xiong Y."/>
            <person name="Zeng A.P."/>
            <person name="Brandt B.W."/>
            <person name="Cornell M.J."/>
            <person name="van den Hondel C.A."/>
            <person name="Visser J."/>
            <person name="Oliver S.G."/>
            <person name="Turner G."/>
        </authorList>
    </citation>
    <scope>GENOME REANNOTATION</scope>
    <source>
        <strain>FGSC A4 / ATCC 38163 / CBS 112.46 / NRRL 194 / M139</strain>
    </source>
</reference>
<reference key="4">
    <citation type="journal article" date="2002" name="FEMS Microbiol. Lett.">
        <title>Functional characterization of 4'-phosphopantetheinyl transferase genes of bacterial and fungal origin by complementation of Saccharomyces cerevisiae lys5.</title>
        <authorList>
            <person name="Mootz H.D."/>
            <person name="Schoergendorfer K."/>
            <person name="Marahiel M.A."/>
        </authorList>
    </citation>
    <scope>CATALYTIC ACTIVITY</scope>
</reference>
<reference key="5">
    <citation type="journal article" date="2003" name="Curr. Genet.">
        <title>The npgA/cfwA gene encodes a putative 4'-phosphopantetheinyl transferase which is essential for penicillin biosynthesis in Aspergillus nidulans.</title>
        <authorList>
            <person name="Keszenman-Pereyra D."/>
            <person name="Lawrence S."/>
            <person name="Twfieg M.E."/>
            <person name="Price J."/>
            <person name="Turner G."/>
        </authorList>
    </citation>
    <scope>FUNCTION</scope>
    <scope>MUTAGENESIS OF ASP-20 AND LEU-217</scope>
</reference>
<reference key="6">
    <citation type="journal article" date="2003" name="Curr. Genet.">
        <title>4'-phosphopantetheinyl transferase-encoding npgA is essential for siderophore biosynthesis in Aspergillus nidulans.</title>
        <authorList>
            <person name="Oberegger H."/>
            <person name="Eisendle M."/>
            <person name="Schrettl M."/>
            <person name="Graessle S."/>
            <person name="Haas H."/>
        </authorList>
    </citation>
    <scope>FUNCTION</scope>
</reference>
<reference key="7">
    <citation type="journal article" date="2007" name="Eukaryot. Cell">
        <title>Phosphopantetheinyl transferase CfwA/NpgA is required for Aspergillus nidulans secondary metabolism and asexual development.</title>
        <authorList>
            <person name="Marquez-Fernandez O."/>
            <person name="Trigos A."/>
            <person name="Ramos-Balderas J.L."/>
            <person name="Viniegra-Gonzalez G."/>
            <person name="Deising H.B."/>
            <person name="Aguirre J."/>
        </authorList>
    </citation>
    <scope>FUNCTION</scope>
</reference>
<reference key="8">
    <citation type="journal article" date="2008" name="Fungal Genet. Biol.">
        <title>Characterization of the atromentin biosynthesis genes and enzymes in the homobasidiomycete Tapinella panuoides.</title>
        <authorList>
            <person name="Schneider P."/>
            <person name="Bouhired S."/>
            <person name="Hoffmeister D."/>
        </authorList>
    </citation>
    <scope>CATALYTIC ACTIVITY</scope>
</reference>
<protein>
    <recommendedName>
        <fullName>4'-phosphopantetheinyl transferase NpgA</fullName>
        <shortName>PPTase</shortName>
        <ecNumber evidence="1 5 6">2.7.8.7</ecNumber>
    </recommendedName>
</protein>
<dbReference type="EC" id="2.7.8.7" evidence="1 5 6"/>
<dbReference type="EMBL" id="AF198117">
    <property type="protein sequence ID" value="AAF12814.1"/>
    <property type="molecule type" value="Genomic_DNA"/>
</dbReference>
<dbReference type="EMBL" id="AACD01000105">
    <property type="protein sequence ID" value="EAA57926.1"/>
    <property type="molecule type" value="Genomic_DNA"/>
</dbReference>
<dbReference type="EMBL" id="BN001301">
    <property type="protein sequence ID" value="CBF70101.1"/>
    <property type="molecule type" value="Genomic_DNA"/>
</dbReference>
<dbReference type="RefSeq" id="XP_663744.1">
    <property type="nucleotide sequence ID" value="XM_658652.1"/>
</dbReference>
<dbReference type="SMR" id="G5EB87"/>
<dbReference type="STRING" id="227321.G5EB87"/>
<dbReference type="EnsemblFungi" id="CBF70101">
    <property type="protein sequence ID" value="CBF70101"/>
    <property type="gene ID" value="ANIA_06140"/>
</dbReference>
<dbReference type="GeneID" id="2870872"/>
<dbReference type="KEGG" id="ani:ANIA_06140"/>
<dbReference type="eggNOG" id="ENOG502SA2B">
    <property type="taxonomic scope" value="Eukaryota"/>
</dbReference>
<dbReference type="HOGENOM" id="CLU_031126_1_1_1"/>
<dbReference type="InParanoid" id="G5EB87"/>
<dbReference type="OMA" id="HRTCRIP"/>
<dbReference type="OrthoDB" id="26719at2759"/>
<dbReference type="BRENDA" id="2.7.8.7">
    <property type="organism ID" value="517"/>
</dbReference>
<dbReference type="Proteomes" id="UP000000560">
    <property type="component" value="Chromosome I"/>
</dbReference>
<dbReference type="GO" id="GO:0005829">
    <property type="term" value="C:cytosol"/>
    <property type="evidence" value="ECO:0000318"/>
    <property type="project" value="GO_Central"/>
</dbReference>
<dbReference type="GO" id="GO:0008897">
    <property type="term" value="F:holo-[acyl-carrier-protein] synthase activity"/>
    <property type="evidence" value="ECO:0000318"/>
    <property type="project" value="GO_Central"/>
</dbReference>
<dbReference type="GO" id="GO:0000287">
    <property type="term" value="F:magnesium ion binding"/>
    <property type="evidence" value="ECO:0007669"/>
    <property type="project" value="InterPro"/>
</dbReference>
<dbReference type="GO" id="GO:0019878">
    <property type="term" value="P:lysine biosynthetic process via aminoadipic acid"/>
    <property type="evidence" value="ECO:0000318"/>
    <property type="project" value="GO_Central"/>
</dbReference>
<dbReference type="FunFam" id="3.90.470.20:FF:000023">
    <property type="entry name" value="L-aminoadipate-semialdehyde dehydrogenase-phosphopantetheinyl transferase"/>
    <property type="match status" value="1"/>
</dbReference>
<dbReference type="Gene3D" id="3.90.470.20">
    <property type="entry name" value="4'-phosphopantetheinyl transferase domain"/>
    <property type="match status" value="1"/>
</dbReference>
<dbReference type="InterPro" id="IPR008278">
    <property type="entry name" value="4-PPantetheinyl_Trfase_dom"/>
</dbReference>
<dbReference type="InterPro" id="IPR037143">
    <property type="entry name" value="4-PPantetheinyl_Trfase_dom_sf"/>
</dbReference>
<dbReference type="InterPro" id="IPR055066">
    <property type="entry name" value="AASDHPPT_N"/>
</dbReference>
<dbReference type="InterPro" id="IPR050559">
    <property type="entry name" value="P-Pant_transferase_sf"/>
</dbReference>
<dbReference type="PANTHER" id="PTHR12215:SF10">
    <property type="entry name" value="L-AMINOADIPATE-SEMIALDEHYDE DEHYDROGENASE-PHOSPHOPANTETHEINYL TRANSFERASE"/>
    <property type="match status" value="1"/>
</dbReference>
<dbReference type="PANTHER" id="PTHR12215">
    <property type="entry name" value="PHOSPHOPANTETHEINE TRANSFERASE"/>
    <property type="match status" value="1"/>
</dbReference>
<dbReference type="Pfam" id="PF22624">
    <property type="entry name" value="AASDHPPT_N"/>
    <property type="match status" value="1"/>
</dbReference>
<dbReference type="Pfam" id="PF01648">
    <property type="entry name" value="ACPS"/>
    <property type="match status" value="1"/>
</dbReference>
<dbReference type="SUPFAM" id="SSF56214">
    <property type="entry name" value="4'-phosphopantetheinyl transferase"/>
    <property type="match status" value="2"/>
</dbReference>
<name>PPTA_EMENI</name>
<evidence type="ECO:0000269" key="1">
    <source>
    </source>
</evidence>
<evidence type="ECO:0000269" key="2">
    <source>
    </source>
</evidence>
<evidence type="ECO:0000269" key="3">
    <source>
    </source>
</evidence>
<evidence type="ECO:0000269" key="4">
    <source>
    </source>
</evidence>
<evidence type="ECO:0000269" key="5">
    <source>
    </source>
</evidence>
<evidence type="ECO:0000269" key="6">
    <source>
    </source>
</evidence>
<evidence type="ECO:0000305" key="7"/>
<keyword id="KW-1185">Reference proteome</keyword>
<keyword id="KW-0808">Transferase</keyword>
<sequence length="344" mass="37711">MVQDTSSASTSPILTRWYIDTRPLTASTAALPLLETLQPADQISVQKYYHLKDKHMSLASNLLKYLFVHRNCRIPWSSIVISRTPDPHRRPCYIPPSGSQEDSFKDGYTGINVEFNVSHQASMVAIAGTAFTPNSGGDSKLKPEVGIDITCVNERQGRNGEERSLESLRQYIDIFSEVFSTAEMANIRRLDGVSSSSLSADRLVDYGYRLFYTYWALKEAYIKMTGEALLAPWLRELEFSNVVAPAAVAESGDSAGDFGEPYTGVRTTLYKNLVEDVRIEVAALGGDYLFATAARGGGIGASSRPGGGPDGSGIRSQDPWRPFKKLDIERDIQPCATGVCNCLS</sequence>
<organism>
    <name type="scientific">Emericella nidulans (strain FGSC A4 / ATCC 38163 / CBS 112.46 / NRRL 194 / M139)</name>
    <name type="common">Aspergillus nidulans</name>
    <dbReference type="NCBI Taxonomy" id="227321"/>
    <lineage>
        <taxon>Eukaryota</taxon>
        <taxon>Fungi</taxon>
        <taxon>Dikarya</taxon>
        <taxon>Ascomycota</taxon>
        <taxon>Pezizomycotina</taxon>
        <taxon>Eurotiomycetes</taxon>
        <taxon>Eurotiomycetidae</taxon>
        <taxon>Eurotiales</taxon>
        <taxon>Aspergillaceae</taxon>
        <taxon>Aspergillus</taxon>
        <taxon>Aspergillus subgen. Nidulantes</taxon>
    </lineage>
</organism>